<protein>
    <recommendedName>
        <fullName>Orofacial cleft 1 candidate gene 1 protein homolog</fullName>
    </recommendedName>
    <alternativeName>
        <fullName>Orofacial clefting chromosomal breakpoint region candidate 1 protein homolog</fullName>
    </alternativeName>
</protein>
<reference key="1">
    <citation type="submission" date="2007-11" db="EMBL/GenBank/DDBJ databases">
        <title>Ojoplano links tissue morphogenesis to polarized secretion.</title>
        <authorList>
            <person name="Martinez-Morales J.R."/>
        </authorList>
    </citation>
    <scope>NUCLEOTIDE SEQUENCE [MRNA]</scope>
</reference>
<gene>
    <name type="primary">OFCC1</name>
    <name type="synonym">OPO</name>
</gene>
<feature type="chain" id="PRO_0000337140" description="Orofacial cleft 1 candidate gene 1 protein homolog">
    <location>
        <begin position="1"/>
        <end position="234"/>
    </location>
</feature>
<feature type="region of interest" description="Disordered" evidence="1">
    <location>
        <begin position="1"/>
        <end position="21"/>
    </location>
</feature>
<feature type="region of interest" description="Disordered" evidence="1">
    <location>
        <begin position="201"/>
        <end position="234"/>
    </location>
</feature>
<feature type="compositionally biased region" description="Basic residues" evidence="1">
    <location>
        <begin position="202"/>
        <end position="213"/>
    </location>
</feature>
<feature type="compositionally biased region" description="Basic and acidic residues" evidence="1">
    <location>
        <begin position="223"/>
        <end position="234"/>
    </location>
</feature>
<dbReference type="EMBL" id="AM920652">
    <property type="protein sequence ID" value="CAP46913.1"/>
    <property type="molecule type" value="mRNA"/>
</dbReference>
<dbReference type="STRING" id="9031.ENSGALP00000069715"/>
<dbReference type="PaxDb" id="9031-ENSGALP00000036456"/>
<dbReference type="VEuPathDB" id="HostDB:geneid_420862"/>
<dbReference type="eggNOG" id="ENOG502QRVX">
    <property type="taxonomic scope" value="Eukaryota"/>
</dbReference>
<dbReference type="HOGENOM" id="CLU_1182502_0_0_1"/>
<dbReference type="InParanoid" id="B0BK70"/>
<dbReference type="OrthoDB" id="347244at2759"/>
<dbReference type="PhylomeDB" id="B0BK70"/>
<dbReference type="PRO" id="PR:B0BK70"/>
<dbReference type="Proteomes" id="UP000000539">
    <property type="component" value="Chromosome 2"/>
</dbReference>
<dbReference type="InterPro" id="IPR031390">
    <property type="entry name" value="OFCC1"/>
</dbReference>
<dbReference type="PANTHER" id="PTHR33862">
    <property type="entry name" value="OROFACIAL CLEFT 1 CANDIDATE GENE 1 PROTEIN"/>
    <property type="match status" value="1"/>
</dbReference>
<dbReference type="PANTHER" id="PTHR33862:SF3">
    <property type="entry name" value="OROFACIAL CLEFT 1 CANDIDATE GENE 1 PROTEIN"/>
    <property type="match status" value="1"/>
</dbReference>
<dbReference type="Pfam" id="PF15680">
    <property type="entry name" value="OFCC1"/>
    <property type="match status" value="1"/>
</dbReference>
<evidence type="ECO:0000256" key="1">
    <source>
        <dbReference type="SAM" id="MobiDB-lite"/>
    </source>
</evidence>
<sequence length="234" mass="27160">MEKEKFQQKALKQTKQKKSKSAEFLMVKEERAATEGIENPAFNISSTDLSAYQTSEEEVIRHDKLHSTLAAHQQKLRLQAHAEPRGNEYSRNYFDLLMDEEINPRQCGMEVSEEDPVKFQEQILYGKLMKLLDEASKIIDSQVPVTGEDFSDSVMPVSFSKTRDLHRELGDEAIPSYIEQFEREVQNDIIMFGSFSLEQDSKHHKEASHHNKKNCNPGFMSSFKDREASRWQQR</sequence>
<name>OFCC1_CHICK</name>
<accession>B0BK70</accession>
<organism>
    <name type="scientific">Gallus gallus</name>
    <name type="common">Chicken</name>
    <dbReference type="NCBI Taxonomy" id="9031"/>
    <lineage>
        <taxon>Eukaryota</taxon>
        <taxon>Metazoa</taxon>
        <taxon>Chordata</taxon>
        <taxon>Craniata</taxon>
        <taxon>Vertebrata</taxon>
        <taxon>Euteleostomi</taxon>
        <taxon>Archelosauria</taxon>
        <taxon>Archosauria</taxon>
        <taxon>Dinosauria</taxon>
        <taxon>Saurischia</taxon>
        <taxon>Theropoda</taxon>
        <taxon>Coelurosauria</taxon>
        <taxon>Aves</taxon>
        <taxon>Neognathae</taxon>
        <taxon>Galloanserae</taxon>
        <taxon>Galliformes</taxon>
        <taxon>Phasianidae</taxon>
        <taxon>Phasianinae</taxon>
        <taxon>Gallus</taxon>
    </lineage>
</organism>
<keyword id="KW-1185">Reference proteome</keyword>
<proteinExistence type="evidence at transcript level"/>